<proteinExistence type="evidence at transcript level"/>
<sequence length="46" mass="4742">MTPQGNKPSCHDVITNAWRPTATDSAAGRAPGYGVITNIINGGLDC</sequence>
<keyword id="KW-0119">Carbohydrate metabolism</keyword>
<keyword id="KW-0146">Chitin degradation</keyword>
<keyword id="KW-0147">Chitin-binding</keyword>
<keyword id="KW-0326">Glycosidase</keyword>
<keyword id="KW-0378">Hydrolase</keyword>
<keyword id="KW-0611">Plant defense</keyword>
<keyword id="KW-0624">Polysaccharide degradation</keyword>
<dbReference type="EC" id="3.2.1.14"/>
<dbReference type="EMBL" id="X56893">
    <property type="protein sequence ID" value="CAA40212.1"/>
    <property type="molecule type" value="mRNA"/>
</dbReference>
<dbReference type="SMR" id="Q06016"/>
<dbReference type="CAZy" id="GH19">
    <property type="family name" value="Glycoside Hydrolase Family 19"/>
</dbReference>
<dbReference type="GO" id="GO:0008061">
    <property type="term" value="F:chitin binding"/>
    <property type="evidence" value="ECO:0007669"/>
    <property type="project" value="UniProtKB-KW"/>
</dbReference>
<dbReference type="GO" id="GO:0008843">
    <property type="term" value="F:endochitinase activity"/>
    <property type="evidence" value="ECO:0007669"/>
    <property type="project" value="UniProtKB-EC"/>
</dbReference>
<dbReference type="GO" id="GO:0016998">
    <property type="term" value="P:cell wall macromolecule catabolic process"/>
    <property type="evidence" value="ECO:0007669"/>
    <property type="project" value="InterPro"/>
</dbReference>
<dbReference type="GO" id="GO:0006032">
    <property type="term" value="P:chitin catabolic process"/>
    <property type="evidence" value="ECO:0007669"/>
    <property type="project" value="UniProtKB-KW"/>
</dbReference>
<dbReference type="GO" id="GO:0006952">
    <property type="term" value="P:defense response"/>
    <property type="evidence" value="ECO:0007669"/>
    <property type="project" value="UniProtKB-KW"/>
</dbReference>
<dbReference type="GO" id="GO:0000272">
    <property type="term" value="P:polysaccharide catabolic process"/>
    <property type="evidence" value="ECO:0007669"/>
    <property type="project" value="UniProtKB-KW"/>
</dbReference>
<dbReference type="Gene3D" id="1.10.530.10">
    <property type="match status" value="1"/>
</dbReference>
<dbReference type="InterPro" id="IPR000726">
    <property type="entry name" value="Glyco_hydro_19_cat"/>
</dbReference>
<dbReference type="InterPro" id="IPR023346">
    <property type="entry name" value="Lysozyme-like_dom_sf"/>
</dbReference>
<dbReference type="Pfam" id="PF00182">
    <property type="entry name" value="Glyco_hydro_19"/>
    <property type="match status" value="1"/>
</dbReference>
<dbReference type="SUPFAM" id="SSF53955">
    <property type="entry name" value="Lysozyme-like"/>
    <property type="match status" value="1"/>
</dbReference>
<feature type="chain" id="PRO_0000124823" description="Endochitinase 4">
    <location>
        <begin position="1" status="less than"/>
        <end position="46" status="greater than"/>
    </location>
</feature>
<feature type="non-terminal residue">
    <location>
        <position position="1"/>
    </location>
</feature>
<feature type="non-terminal residue">
    <location>
        <position position="46"/>
    </location>
</feature>
<evidence type="ECO:0000305" key="1"/>
<organism>
    <name type="scientific">Arachis hypogaea</name>
    <name type="common">Peanut</name>
    <dbReference type="NCBI Taxonomy" id="3818"/>
    <lineage>
        <taxon>Eukaryota</taxon>
        <taxon>Viridiplantae</taxon>
        <taxon>Streptophyta</taxon>
        <taxon>Embryophyta</taxon>
        <taxon>Tracheophyta</taxon>
        <taxon>Spermatophyta</taxon>
        <taxon>Magnoliopsida</taxon>
        <taxon>eudicotyledons</taxon>
        <taxon>Gunneridae</taxon>
        <taxon>Pentapetalae</taxon>
        <taxon>rosids</taxon>
        <taxon>fabids</taxon>
        <taxon>Fabales</taxon>
        <taxon>Fabaceae</taxon>
        <taxon>Papilionoideae</taxon>
        <taxon>50 kb inversion clade</taxon>
        <taxon>dalbergioids sensu lato</taxon>
        <taxon>Dalbergieae</taxon>
        <taxon>Pterocarpus clade</taxon>
        <taxon>Arachis</taxon>
    </lineage>
</organism>
<name>CHI4_ARAHY</name>
<comment type="function">
    <text>Defense against chitin-containing fungal and bacterial pathogens.</text>
</comment>
<comment type="catalytic activity">
    <reaction>
        <text>Random endo-hydrolysis of N-acetyl-beta-D-glucosaminide (1-&gt;4)-beta-linkages in chitin and chitodextrins.</text>
        <dbReference type="EC" id="3.2.1.14"/>
    </reaction>
</comment>
<comment type="induction">
    <text>By glucan elicitor, and to a lesser extent by yeast extract, P.megasperma elicitor, UV light and dilution.</text>
</comment>
<comment type="similarity">
    <text evidence="1">Belongs to the glycosyl hydrolase 19 family. Chitinase class I subfamily.</text>
</comment>
<accession>Q06016</accession>
<protein>
    <recommendedName>
        <fullName>Endochitinase 4</fullName>
        <shortName>CHIT 4</shortName>
        <ecNumber>3.2.1.14</ecNumber>
    </recommendedName>
</protein>
<reference key="1">
    <citation type="journal article" date="1990" name="Mol. Gen. Genet.">
        <title>Elicitor-specific induction of one member of the chitinase gene family in Arachis hypogaea.</title>
        <authorList>
            <person name="Herget T."/>
            <person name="Schell J."/>
            <person name="Schreier P.H."/>
        </authorList>
    </citation>
    <scope>NUCLEOTIDE SEQUENCE [MRNA]</scope>
</reference>